<dbReference type="EMBL" id="AF043444">
    <property type="protein sequence ID" value="AAC25067.1"/>
    <property type="molecule type" value="Genomic_DNA"/>
</dbReference>
<dbReference type="EMBL" id="AY530203">
    <property type="protein sequence ID" value="AAS20442.1"/>
    <property type="molecule type" value="Genomic_DNA"/>
</dbReference>
<dbReference type="RefSeq" id="WP_011167994.1">
    <property type="nucleotide sequence ID" value="NZ_CP166925.2"/>
</dbReference>
<dbReference type="OMA" id="VRCGYLT"/>
<dbReference type="GO" id="GO:0005886">
    <property type="term" value="C:plasma membrane"/>
    <property type="evidence" value="ECO:0007669"/>
    <property type="project" value="UniProtKB-SubCell"/>
</dbReference>
<gene>
    <name type="primary">hrcQa</name>
    <name type="synonym">hrcQ1</name>
    <name type="synonym">hrpU2</name>
</gene>
<reference key="1">
    <citation type="submission" date="1998-01" db="EMBL/GenBank/DDBJ databases">
        <title>The hrpD locus of Pseudomonas syringae pv. phaseolicola encodes the five most broadly conserved proteins in the signal peptide independent (type III) protein export system common to plant and animal pathogenic bacteria.</title>
        <authorList>
            <person name="Frederick R.D."/>
            <person name="Panopoulos N.J."/>
        </authorList>
    </citation>
    <scope>NUCLEOTIDE SEQUENCE [GENOMIC DNA]</scope>
    <source>
        <strain>NPS 3121</strain>
    </source>
</reference>
<reference key="2">
    <citation type="journal article" date="2004" name="Mol. Plant Pathol.">
        <title>The PCR amplification and characterization of entire Pseudomonas syringae hrp/hrc clusters.</title>
        <authorList>
            <person name="Gropp S.J."/>
            <person name="Guttman D.S."/>
        </authorList>
        <dbReference type="AGRICOLA" id="IND43617657"/>
    </citation>
    <scope>NUCLEOTIDE SEQUENCE [GENOMIC DNA]</scope>
    <source>
        <strain>NPS 3121</strain>
    </source>
</reference>
<reference key="3">
    <citation type="journal article" date="2004" name="Proc. Natl. Acad. Sci. U.S.A.">
        <title>Structure of HrcQb-C, a conserved component of the bacterial type III secretion systems.</title>
        <authorList>
            <person name="Fadouloglou V.E."/>
            <person name="Tampakaki A.P."/>
            <person name="Glykos N.M."/>
            <person name="Bastaki M.N."/>
            <person name="Hadden J.M."/>
            <person name="Phillips S.E."/>
            <person name="Panopoulos N.J."/>
            <person name="Kokkinidis M."/>
        </authorList>
    </citation>
    <scope>INTERACTION WITH HRCQB</scope>
    <scope>SUBCELLULAR LOCATION</scope>
</reference>
<evidence type="ECO:0000269" key="1">
    <source>
    </source>
</evidence>
<sequence>MSALRLRKVDALLAQATRELGAGQSLGFSAAGQDAELTLLPLLADAGEPAGAVWLSTAIGPLLLSDAEALLSLLGDIPLTLGGEQQAWYWQLFNQRLSPTVARLLAPVEPLHNKPQAPTLGCRVQIRRGGEQLHAHMHATPDTLLRLLRSASWQARTRTVDESWSVASPLIIGEMSLTREQIASLRPGDVVLPAHCQFDSAGQGFLSLAGRQWAAQTDQHAQRLFLRLSHEEHRHHEY</sequence>
<name>HRCQA_PSESH</name>
<feature type="chain" id="PRO_0000084061" description="Type III secretion protein hrcQa">
    <location>
        <begin position="1"/>
        <end position="238"/>
    </location>
</feature>
<feature type="region of interest" description="HrcQa-C">
    <location>
        <begin position="66"/>
        <end position="238"/>
    </location>
</feature>
<organism>
    <name type="scientific">Pseudomonas savastanoi pv. phaseolicola</name>
    <name type="common">Pseudomonas syringae pv. phaseolicola</name>
    <dbReference type="NCBI Taxonomy" id="319"/>
    <lineage>
        <taxon>Bacteria</taxon>
        <taxon>Pseudomonadati</taxon>
        <taxon>Pseudomonadota</taxon>
        <taxon>Gammaproteobacteria</taxon>
        <taxon>Pseudomonadales</taxon>
        <taxon>Pseudomonadaceae</taxon>
        <taxon>Pseudomonas</taxon>
    </lineage>
</organism>
<proteinExistence type="evidence at protein level"/>
<accession>O85093</accession>
<comment type="function">
    <text>Component of the type III secretion system, which is required for effector protein delivery, parasitism, and pathogenicity. Probably participates in the formation of a C-ring-like assembly along with hrcQb.</text>
</comment>
<comment type="subunit">
    <text evidence="1">Interacts with hrcQb.</text>
</comment>
<comment type="subcellular location">
    <subcellularLocation>
        <location evidence="1">Cell inner membrane</location>
        <topology evidence="1">Peripheral membrane protein</topology>
    </subcellularLocation>
</comment>
<comment type="domain">
    <text>The HrcQa-C domain interacts with the hrcQb C-terminal domain.</text>
</comment>
<keyword id="KW-0997">Cell inner membrane</keyword>
<keyword id="KW-1003">Cell membrane</keyword>
<keyword id="KW-0472">Membrane</keyword>
<keyword id="KW-0843">Virulence</keyword>
<protein>
    <recommendedName>
        <fullName>Type III secretion protein hrcQa</fullName>
    </recommendedName>
</protein>